<gene>
    <name evidence="9" type="primary">wash</name>
    <name evidence="9" type="ORF">CG13176</name>
</gene>
<accession>Q7JW27</accession>
<accession>A0A0B4LF66</accession>
<name>WASH1_DROME</name>
<comment type="function">
    <text evidence="5 7 8">Acts as a nucleation-promoting factor by activating the Arp2/3 complex to induce actin polymerization (PubMed:19633175). Participates in both linear- and branched-actin networks (PubMed:19633175). Functions in linear-filament (bundled F-actin) by acting downstream of Rho1 and regulating actin and microtubule organization during oogenesis (PubMed:19633175). Nucleates actin in an Arp2/3-dependent manner and exhibits F-actin and microtubule bundling and cross-linking activity in the egg chamber (PubMed:19633175). During embryogenesis, acts downstream of Rho1 to activate the Arp2/3 complex which is necessary for the developmental migration of tail hemocytes anteriorly along the ventral midline (PubMed:25739458). Its function in hemocyte transmigration is independent of the WASH complex (PubMed:25739458). May play a role in endosomal sorting; its assembly in the WASH complex may regulate its nucleation-promoting factor (NPF) activity.</text>
</comment>
<comment type="subunit">
    <text evidence="5 6 7">Component of the WASH complex (PubMed:20498093). Interacts with spir and capu (PubMed:19633175). Interacts (via N-terminus) with Rho1 (via N-terminus) (PubMed:25739458).</text>
</comment>
<comment type="disruption phenotype">
    <text evidence="3">Lethal. Larvae die at the transition from third larval instar to prepupal stage.</text>
</comment>
<comment type="similarity">
    <text evidence="8">Belongs to the WASH1 family.</text>
</comment>
<keyword id="KW-0009">Actin-binding</keyword>
<keyword id="KW-0221">Differentiation</keyword>
<keyword id="KW-0896">Oogenesis</keyword>
<keyword id="KW-0597">Phosphoprotein</keyword>
<keyword id="KW-0653">Protein transport</keyword>
<keyword id="KW-1185">Reference proteome</keyword>
<keyword id="KW-0813">Transport</keyword>
<proteinExistence type="evidence at protein level"/>
<reference key="1">
    <citation type="journal article" date="2000" name="Science">
        <title>The genome sequence of Drosophila melanogaster.</title>
        <authorList>
            <person name="Adams M.D."/>
            <person name="Celniker S.E."/>
            <person name="Holt R.A."/>
            <person name="Evans C.A."/>
            <person name="Gocayne J.D."/>
            <person name="Amanatides P.G."/>
            <person name="Scherer S.E."/>
            <person name="Li P.W."/>
            <person name="Hoskins R.A."/>
            <person name="Galle R.F."/>
            <person name="George R.A."/>
            <person name="Lewis S.E."/>
            <person name="Richards S."/>
            <person name="Ashburner M."/>
            <person name="Henderson S.N."/>
            <person name="Sutton G.G."/>
            <person name="Wortman J.R."/>
            <person name="Yandell M.D."/>
            <person name="Zhang Q."/>
            <person name="Chen L.X."/>
            <person name="Brandon R.C."/>
            <person name="Rogers Y.-H.C."/>
            <person name="Blazej R.G."/>
            <person name="Champe M."/>
            <person name="Pfeiffer B.D."/>
            <person name="Wan K.H."/>
            <person name="Doyle C."/>
            <person name="Baxter E.G."/>
            <person name="Helt G."/>
            <person name="Nelson C.R."/>
            <person name="Miklos G.L.G."/>
            <person name="Abril J.F."/>
            <person name="Agbayani A."/>
            <person name="An H.-J."/>
            <person name="Andrews-Pfannkoch C."/>
            <person name="Baldwin D."/>
            <person name="Ballew R.M."/>
            <person name="Basu A."/>
            <person name="Baxendale J."/>
            <person name="Bayraktaroglu L."/>
            <person name="Beasley E.M."/>
            <person name="Beeson K.Y."/>
            <person name="Benos P.V."/>
            <person name="Berman B.P."/>
            <person name="Bhandari D."/>
            <person name="Bolshakov S."/>
            <person name="Borkova D."/>
            <person name="Botchan M.R."/>
            <person name="Bouck J."/>
            <person name="Brokstein P."/>
            <person name="Brottier P."/>
            <person name="Burtis K.C."/>
            <person name="Busam D.A."/>
            <person name="Butler H."/>
            <person name="Cadieu E."/>
            <person name="Center A."/>
            <person name="Chandra I."/>
            <person name="Cherry J.M."/>
            <person name="Cawley S."/>
            <person name="Dahlke C."/>
            <person name="Davenport L.B."/>
            <person name="Davies P."/>
            <person name="de Pablos B."/>
            <person name="Delcher A."/>
            <person name="Deng Z."/>
            <person name="Mays A.D."/>
            <person name="Dew I."/>
            <person name="Dietz S.M."/>
            <person name="Dodson K."/>
            <person name="Doup L.E."/>
            <person name="Downes M."/>
            <person name="Dugan-Rocha S."/>
            <person name="Dunkov B.C."/>
            <person name="Dunn P."/>
            <person name="Durbin K.J."/>
            <person name="Evangelista C.C."/>
            <person name="Ferraz C."/>
            <person name="Ferriera S."/>
            <person name="Fleischmann W."/>
            <person name="Fosler C."/>
            <person name="Gabrielian A.E."/>
            <person name="Garg N.S."/>
            <person name="Gelbart W.M."/>
            <person name="Glasser K."/>
            <person name="Glodek A."/>
            <person name="Gong F."/>
            <person name="Gorrell J.H."/>
            <person name="Gu Z."/>
            <person name="Guan P."/>
            <person name="Harris M."/>
            <person name="Harris N.L."/>
            <person name="Harvey D.A."/>
            <person name="Heiman T.J."/>
            <person name="Hernandez J.R."/>
            <person name="Houck J."/>
            <person name="Hostin D."/>
            <person name="Houston K.A."/>
            <person name="Howland T.J."/>
            <person name="Wei M.-H."/>
            <person name="Ibegwam C."/>
            <person name="Jalali M."/>
            <person name="Kalush F."/>
            <person name="Karpen G.H."/>
            <person name="Ke Z."/>
            <person name="Kennison J.A."/>
            <person name="Ketchum K.A."/>
            <person name="Kimmel B.E."/>
            <person name="Kodira C.D."/>
            <person name="Kraft C.L."/>
            <person name="Kravitz S."/>
            <person name="Kulp D."/>
            <person name="Lai Z."/>
            <person name="Lasko P."/>
            <person name="Lei Y."/>
            <person name="Levitsky A.A."/>
            <person name="Li J.H."/>
            <person name="Li Z."/>
            <person name="Liang Y."/>
            <person name="Lin X."/>
            <person name="Liu X."/>
            <person name="Mattei B."/>
            <person name="McIntosh T.C."/>
            <person name="McLeod M.P."/>
            <person name="McPherson D."/>
            <person name="Merkulov G."/>
            <person name="Milshina N.V."/>
            <person name="Mobarry C."/>
            <person name="Morris J."/>
            <person name="Moshrefi A."/>
            <person name="Mount S.M."/>
            <person name="Moy M."/>
            <person name="Murphy B."/>
            <person name="Murphy L."/>
            <person name="Muzny D.M."/>
            <person name="Nelson D.L."/>
            <person name="Nelson D.R."/>
            <person name="Nelson K.A."/>
            <person name="Nixon K."/>
            <person name="Nusskern D.R."/>
            <person name="Pacleb J.M."/>
            <person name="Palazzolo M."/>
            <person name="Pittman G.S."/>
            <person name="Pan S."/>
            <person name="Pollard J."/>
            <person name="Puri V."/>
            <person name="Reese M.G."/>
            <person name="Reinert K."/>
            <person name="Remington K."/>
            <person name="Saunders R.D.C."/>
            <person name="Scheeler F."/>
            <person name="Shen H."/>
            <person name="Shue B.C."/>
            <person name="Siden-Kiamos I."/>
            <person name="Simpson M."/>
            <person name="Skupski M.P."/>
            <person name="Smith T.J."/>
            <person name="Spier E."/>
            <person name="Spradling A.C."/>
            <person name="Stapleton M."/>
            <person name="Strong R."/>
            <person name="Sun E."/>
            <person name="Svirskas R."/>
            <person name="Tector C."/>
            <person name="Turner R."/>
            <person name="Venter E."/>
            <person name="Wang A.H."/>
            <person name="Wang X."/>
            <person name="Wang Z.-Y."/>
            <person name="Wassarman D.A."/>
            <person name="Weinstock G.M."/>
            <person name="Weissenbach J."/>
            <person name="Williams S.M."/>
            <person name="Woodage T."/>
            <person name="Worley K.C."/>
            <person name="Wu D."/>
            <person name="Yang S."/>
            <person name="Yao Q.A."/>
            <person name="Ye J."/>
            <person name="Yeh R.-F."/>
            <person name="Zaveri J.S."/>
            <person name="Zhan M."/>
            <person name="Zhang G."/>
            <person name="Zhao Q."/>
            <person name="Zheng L."/>
            <person name="Zheng X.H."/>
            <person name="Zhong F.N."/>
            <person name="Zhong W."/>
            <person name="Zhou X."/>
            <person name="Zhu S.C."/>
            <person name="Zhu X."/>
            <person name="Smith H.O."/>
            <person name="Gibbs R.A."/>
            <person name="Myers E.W."/>
            <person name="Rubin G.M."/>
            <person name="Venter J.C."/>
        </authorList>
    </citation>
    <scope>NUCLEOTIDE SEQUENCE [LARGE SCALE GENOMIC DNA]</scope>
    <source>
        <strain>Berkeley</strain>
    </source>
</reference>
<reference key="2">
    <citation type="journal article" date="2002" name="Genome Biol.">
        <title>Annotation of the Drosophila melanogaster euchromatic genome: a systematic review.</title>
        <authorList>
            <person name="Misra S."/>
            <person name="Crosby M.A."/>
            <person name="Mungall C.J."/>
            <person name="Matthews B.B."/>
            <person name="Campbell K.S."/>
            <person name="Hradecky P."/>
            <person name="Huang Y."/>
            <person name="Kaminker J.S."/>
            <person name="Millburn G.H."/>
            <person name="Prochnik S.E."/>
            <person name="Smith C.D."/>
            <person name="Tupy J.L."/>
            <person name="Whitfield E.J."/>
            <person name="Bayraktaroglu L."/>
            <person name="Berman B.P."/>
            <person name="Bettencourt B.R."/>
            <person name="Celniker S.E."/>
            <person name="de Grey A.D.N.J."/>
            <person name="Drysdale R.A."/>
            <person name="Harris N.L."/>
            <person name="Richter J."/>
            <person name="Russo S."/>
            <person name="Schroeder A.J."/>
            <person name="Shu S.Q."/>
            <person name="Stapleton M."/>
            <person name="Yamada C."/>
            <person name="Ashburner M."/>
            <person name="Gelbart W.M."/>
            <person name="Rubin G.M."/>
            <person name="Lewis S.E."/>
        </authorList>
    </citation>
    <scope>GENOME REANNOTATION</scope>
    <source>
        <strain>Berkeley</strain>
    </source>
</reference>
<reference key="3">
    <citation type="journal article" date="2002" name="Genome Biol.">
        <title>A Drosophila full-length cDNA resource.</title>
        <authorList>
            <person name="Stapleton M."/>
            <person name="Carlson J.W."/>
            <person name="Brokstein P."/>
            <person name="Yu C."/>
            <person name="Champe M."/>
            <person name="George R.A."/>
            <person name="Guarin H."/>
            <person name="Kronmiller B."/>
            <person name="Pacleb J.M."/>
            <person name="Park S."/>
            <person name="Wan K.H."/>
            <person name="Rubin G.M."/>
            <person name="Celniker S.E."/>
        </authorList>
    </citation>
    <scope>NUCLEOTIDE SEQUENCE [LARGE SCALE MRNA]</scope>
    <source>
        <strain>Berkeley</strain>
        <tissue>Head</tissue>
    </source>
</reference>
<reference key="4">
    <citation type="journal article" date="2007" name="PLoS Genet.">
        <title>Human subtelomeric WASH genes encode a new subclass of the WASP family.</title>
        <authorList>
            <person name="Linardopoulou E.V."/>
            <person name="Parghi S.S."/>
            <person name="Friedman C."/>
            <person name="Osborn G.E."/>
            <person name="Parkhurst S.M."/>
            <person name="Trask B.J."/>
        </authorList>
    </citation>
    <scope>DISRUPTION PHENOTYPE</scope>
</reference>
<reference key="5">
    <citation type="journal article" date="2008" name="J. Proteome Res.">
        <title>Phosphoproteome analysis of Drosophila melanogaster embryos.</title>
        <authorList>
            <person name="Zhai B."/>
            <person name="Villen J."/>
            <person name="Beausoleil S.A."/>
            <person name="Mintseris J."/>
            <person name="Gygi S.P."/>
        </authorList>
    </citation>
    <scope>PHOSPHORYLATION [LARGE SCALE ANALYSIS] AT SER-491</scope>
    <scope>IDENTIFICATION BY MASS SPECTROMETRY</scope>
    <source>
        <tissue>Embryo</tissue>
    </source>
</reference>
<reference key="6">
    <citation type="journal article" date="2009" name="Development">
        <title>Wash functions downstream of Rho and links linear and branched actin nucleation factors.</title>
        <authorList>
            <person name="Liu R."/>
            <person name="Abreu-Blanco M.T."/>
            <person name="Barry K.C."/>
            <person name="Linardopoulou E.V."/>
            <person name="Osborn G.E."/>
            <person name="Parkhurst S.M."/>
        </authorList>
    </citation>
    <scope>FUNCTION</scope>
    <scope>INTERACTION WITH SPIR AND CAPU</scope>
</reference>
<reference key="7">
    <citation type="journal article" date="2010" name="Proc. Natl. Acad. Sci. U.S.A.">
        <title>WASH and WAVE actin regulators of the Wiskott-Aldrich syndrome protein (WASP) family are controlled by analogous structurally related complexes.</title>
        <authorList>
            <person name="Jia D."/>
            <person name="Gomez T.S."/>
            <person name="Metlagel Z."/>
            <person name="Umetani J."/>
            <person name="Otwinowski Z."/>
            <person name="Rosen M.K."/>
            <person name="Billadeau D.D."/>
        </authorList>
    </citation>
    <scope>SUBUNIT</scope>
</reference>
<reference key="8">
    <citation type="journal article" date="2015" name="Mol. Biol. Cell">
        <title>Wash functions downstream of Rho1 GTPase in a subset of Drosophila immune cell developmental migrations.</title>
        <authorList>
            <person name="Verboon J.M."/>
            <person name="Rahe T.K."/>
            <person name="Rodriguez-Mesa E."/>
            <person name="Parkhurst S.M."/>
        </authorList>
    </citation>
    <scope>FUNCTION</scope>
    <scope>INTERACTION WITH RHO1</scope>
</reference>
<evidence type="ECO:0000250" key="1">
    <source>
        <dbReference type="UniProtKB" id="A8K0Z3"/>
    </source>
</evidence>
<evidence type="ECO:0000256" key="2">
    <source>
        <dbReference type="SAM" id="MobiDB-lite"/>
    </source>
</evidence>
<evidence type="ECO:0000269" key="3">
    <source>
    </source>
</evidence>
<evidence type="ECO:0000269" key="4">
    <source>
    </source>
</evidence>
<evidence type="ECO:0000269" key="5">
    <source>
    </source>
</evidence>
<evidence type="ECO:0000269" key="6">
    <source>
    </source>
</evidence>
<evidence type="ECO:0000269" key="7">
    <source>
    </source>
</evidence>
<evidence type="ECO:0000305" key="8"/>
<evidence type="ECO:0000312" key="9">
    <source>
        <dbReference type="FlyBase" id="FBgn0033692"/>
    </source>
</evidence>
<dbReference type="EMBL" id="AE013599">
    <property type="protein sequence ID" value="AAF58562.1"/>
    <property type="molecule type" value="Genomic_DNA"/>
</dbReference>
<dbReference type="EMBL" id="AE013599">
    <property type="protein sequence ID" value="AHN56132.1"/>
    <property type="molecule type" value="Genomic_DNA"/>
</dbReference>
<dbReference type="EMBL" id="AY118440">
    <property type="protein sequence ID" value="AAM48469.1"/>
    <property type="molecule type" value="mRNA"/>
</dbReference>
<dbReference type="RefSeq" id="NP_001286334.1">
    <property type="nucleotide sequence ID" value="NM_001299405.1"/>
</dbReference>
<dbReference type="RefSeq" id="NP_610739.1">
    <property type="nucleotide sequence ID" value="NM_136895.4"/>
</dbReference>
<dbReference type="SMR" id="Q7JW27"/>
<dbReference type="BioGRID" id="62092">
    <property type="interactions" value="17"/>
</dbReference>
<dbReference type="ComplexPortal" id="CPX-2562">
    <property type="entry name" value="WASH complex"/>
</dbReference>
<dbReference type="FunCoup" id="Q7JW27">
    <property type="interactions" value="1221"/>
</dbReference>
<dbReference type="IntAct" id="Q7JW27">
    <property type="interactions" value="2"/>
</dbReference>
<dbReference type="STRING" id="7227.FBpp0308667"/>
<dbReference type="iPTMnet" id="Q7JW27"/>
<dbReference type="PaxDb" id="7227-FBpp0087097"/>
<dbReference type="DNASU" id="36311"/>
<dbReference type="EnsemblMetazoa" id="FBtr0087989">
    <property type="protein sequence ID" value="FBpp0087097"/>
    <property type="gene ID" value="FBgn0033692"/>
</dbReference>
<dbReference type="EnsemblMetazoa" id="FBtr0339595">
    <property type="protein sequence ID" value="FBpp0308667"/>
    <property type="gene ID" value="FBgn0033692"/>
</dbReference>
<dbReference type="GeneID" id="36311"/>
<dbReference type="KEGG" id="dme:Dmel_CG13176"/>
<dbReference type="UCSC" id="CG13176-RA">
    <property type="organism name" value="d. melanogaster"/>
</dbReference>
<dbReference type="AGR" id="FB:FBgn0033692"/>
<dbReference type="CTD" id="36311"/>
<dbReference type="FlyBase" id="FBgn0033692">
    <property type="gene designation" value="wash"/>
</dbReference>
<dbReference type="VEuPathDB" id="VectorBase:FBgn0033692"/>
<dbReference type="eggNOG" id="ENOG502QSX3">
    <property type="taxonomic scope" value="Eukaryota"/>
</dbReference>
<dbReference type="GeneTree" id="ENSGT00390000016717"/>
<dbReference type="HOGENOM" id="CLU_029156_1_0_1"/>
<dbReference type="InParanoid" id="Q7JW27"/>
<dbReference type="OMA" id="SMDSPYE"/>
<dbReference type="OrthoDB" id="307871at2759"/>
<dbReference type="PhylomeDB" id="Q7JW27"/>
<dbReference type="Reactome" id="R-DME-2029482">
    <property type="pathway name" value="Regulation of actin dynamics for phagocytic cup formation"/>
</dbReference>
<dbReference type="Reactome" id="R-DME-5663213">
    <property type="pathway name" value="RHO GTPases Activate WASPs and WAVEs"/>
</dbReference>
<dbReference type="SignaLink" id="Q7JW27"/>
<dbReference type="BioGRID-ORCS" id="36311">
    <property type="hits" value="0 hits in 3 CRISPR screens"/>
</dbReference>
<dbReference type="ChiTaRS" id="wash">
    <property type="organism name" value="fly"/>
</dbReference>
<dbReference type="GenomeRNAi" id="36311"/>
<dbReference type="PRO" id="PR:Q7JW27"/>
<dbReference type="Proteomes" id="UP000000803">
    <property type="component" value="Chromosome 2R"/>
</dbReference>
<dbReference type="Bgee" id="FBgn0033692">
    <property type="expression patterns" value="Expressed in early-mid elongation-stage spermatid (Drosophila) in testis and 59 other cell types or tissues"/>
</dbReference>
<dbReference type="ExpressionAtlas" id="Q7JW27">
    <property type="expression patterns" value="baseline and differential"/>
</dbReference>
<dbReference type="GO" id="GO:0005737">
    <property type="term" value="C:cytoplasm"/>
    <property type="evidence" value="ECO:0000314"/>
    <property type="project" value="FlyBase"/>
</dbReference>
<dbReference type="GO" id="GO:0005829">
    <property type="term" value="C:cytosol"/>
    <property type="evidence" value="ECO:0007669"/>
    <property type="project" value="GOC"/>
</dbReference>
<dbReference type="GO" id="GO:0005769">
    <property type="term" value="C:early endosome"/>
    <property type="evidence" value="ECO:0000318"/>
    <property type="project" value="GO_Central"/>
</dbReference>
<dbReference type="GO" id="GO:0005768">
    <property type="term" value="C:endosome"/>
    <property type="evidence" value="ECO:0000314"/>
    <property type="project" value="FlyBase"/>
</dbReference>
<dbReference type="GO" id="GO:0005635">
    <property type="term" value="C:nuclear envelope"/>
    <property type="evidence" value="ECO:0000314"/>
    <property type="project" value="FlyBase"/>
</dbReference>
<dbReference type="GO" id="GO:0005654">
    <property type="term" value="C:nucleoplasm"/>
    <property type="evidence" value="ECO:0000314"/>
    <property type="project" value="FlyBase"/>
</dbReference>
<dbReference type="GO" id="GO:0005634">
    <property type="term" value="C:nucleus"/>
    <property type="evidence" value="ECO:0000314"/>
    <property type="project" value="FlyBase"/>
</dbReference>
<dbReference type="GO" id="GO:0048471">
    <property type="term" value="C:perinuclear region of cytoplasm"/>
    <property type="evidence" value="ECO:0000314"/>
    <property type="project" value="FlyBase"/>
</dbReference>
<dbReference type="GO" id="GO:0055037">
    <property type="term" value="C:recycling endosome"/>
    <property type="evidence" value="ECO:0000318"/>
    <property type="project" value="GO_Central"/>
</dbReference>
<dbReference type="GO" id="GO:0071203">
    <property type="term" value="C:WASH complex"/>
    <property type="evidence" value="ECO:0000314"/>
    <property type="project" value="UniProtKB"/>
</dbReference>
<dbReference type="GO" id="GO:0003779">
    <property type="term" value="F:actin binding"/>
    <property type="evidence" value="ECO:0007669"/>
    <property type="project" value="UniProtKB-KW"/>
</dbReference>
<dbReference type="GO" id="GO:0043014">
    <property type="term" value="F:alpha-tubulin binding"/>
    <property type="evidence" value="ECO:0000318"/>
    <property type="project" value="GO_Central"/>
</dbReference>
<dbReference type="GO" id="GO:0003682">
    <property type="term" value="F:chromatin binding"/>
    <property type="evidence" value="ECO:0000314"/>
    <property type="project" value="FlyBase"/>
</dbReference>
<dbReference type="GO" id="GO:0043015">
    <property type="term" value="F:gamma-tubulin binding"/>
    <property type="evidence" value="ECO:0000318"/>
    <property type="project" value="GO_Central"/>
</dbReference>
<dbReference type="GO" id="GO:0051020">
    <property type="term" value="F:GTPase binding"/>
    <property type="evidence" value="ECO:0000353"/>
    <property type="project" value="FlyBase"/>
</dbReference>
<dbReference type="GO" id="GO:0005521">
    <property type="term" value="F:lamin binding"/>
    <property type="evidence" value="ECO:0000314"/>
    <property type="project" value="FlyBase"/>
</dbReference>
<dbReference type="GO" id="GO:0051764">
    <property type="term" value="P:actin crosslink formation"/>
    <property type="evidence" value="ECO:0000314"/>
    <property type="project" value="FlyBase"/>
</dbReference>
<dbReference type="GO" id="GO:0030036">
    <property type="term" value="P:actin cytoskeleton organization"/>
    <property type="evidence" value="ECO:0000315"/>
    <property type="project" value="FlyBase"/>
</dbReference>
<dbReference type="GO" id="GO:0051017">
    <property type="term" value="P:actin filament bundle assembly"/>
    <property type="evidence" value="ECO:0000314"/>
    <property type="project" value="FlyBase"/>
</dbReference>
<dbReference type="GO" id="GO:0034314">
    <property type="term" value="P:Arp2/3 complex-mediated actin nucleation"/>
    <property type="evidence" value="ECO:0000314"/>
    <property type="project" value="FlyBase"/>
</dbReference>
<dbReference type="GO" id="GO:0032456">
    <property type="term" value="P:endocytic recycling"/>
    <property type="evidence" value="ECO:0000318"/>
    <property type="project" value="GO_Central"/>
</dbReference>
<dbReference type="GO" id="GO:0006887">
    <property type="term" value="P:exocytosis"/>
    <property type="evidence" value="ECO:0000318"/>
    <property type="project" value="GO_Central"/>
</dbReference>
<dbReference type="GO" id="GO:0031507">
    <property type="term" value="P:heterochromatin formation"/>
    <property type="evidence" value="ECO:0000315"/>
    <property type="project" value="FlyBase"/>
</dbReference>
<dbReference type="GO" id="GO:0001578">
    <property type="term" value="P:microtubule bundle formation"/>
    <property type="evidence" value="ECO:0000314"/>
    <property type="project" value="FlyBase"/>
</dbReference>
<dbReference type="GO" id="GO:0140591">
    <property type="term" value="P:nuclear envelope budding"/>
    <property type="evidence" value="ECO:0000315"/>
    <property type="project" value="FlyBase"/>
</dbReference>
<dbReference type="GO" id="GO:0006998">
    <property type="term" value="P:nuclear envelope organization"/>
    <property type="evidence" value="ECO:0000315"/>
    <property type="project" value="FlyBase"/>
</dbReference>
<dbReference type="GO" id="GO:0071765">
    <property type="term" value="P:nuclear inner membrane organization"/>
    <property type="evidence" value="ECO:0000315"/>
    <property type="project" value="FlyBase"/>
</dbReference>
<dbReference type="GO" id="GO:0048477">
    <property type="term" value="P:oogenesis"/>
    <property type="evidence" value="ECO:0000315"/>
    <property type="project" value="FlyBase"/>
</dbReference>
<dbReference type="GO" id="GO:0033630">
    <property type="term" value="P:positive regulation of cell adhesion mediated by integrin"/>
    <property type="evidence" value="ECO:0000315"/>
    <property type="project" value="FlyBase"/>
</dbReference>
<dbReference type="GO" id="GO:0035210">
    <property type="term" value="P:prepupal development"/>
    <property type="evidence" value="ECO:0000315"/>
    <property type="project" value="FlyBase"/>
</dbReference>
<dbReference type="GO" id="GO:0015031">
    <property type="term" value="P:protein transport"/>
    <property type="evidence" value="ECO:0007669"/>
    <property type="project" value="UniProtKB-KW"/>
</dbReference>
<dbReference type="GO" id="GO:0033044">
    <property type="term" value="P:regulation of chromosome organization"/>
    <property type="evidence" value="ECO:0000315"/>
    <property type="project" value="FlyBase"/>
</dbReference>
<dbReference type="GO" id="GO:2001135">
    <property type="term" value="P:regulation of endocytic recycling"/>
    <property type="evidence" value="ECO:0000315"/>
    <property type="project" value="FlyBase"/>
</dbReference>
<dbReference type="GO" id="GO:0035751">
    <property type="term" value="P:regulation of lysosomal lumen pH"/>
    <property type="evidence" value="ECO:0000315"/>
    <property type="project" value="FlyBase"/>
</dbReference>
<dbReference type="GO" id="GO:1903353">
    <property type="term" value="P:regulation of nucleus organization"/>
    <property type="evidence" value="ECO:0000315"/>
    <property type="project" value="FlyBase"/>
</dbReference>
<dbReference type="GO" id="GO:0042147">
    <property type="term" value="P:retrograde transport, endosome to Golgi"/>
    <property type="evidence" value="ECO:0000315"/>
    <property type="project" value="FlyBase"/>
</dbReference>
<dbReference type="GO" id="GO:0035277">
    <property type="term" value="P:spiracle morphogenesis, open tracheal system"/>
    <property type="evidence" value="ECO:0000315"/>
    <property type="project" value="FlyBase"/>
</dbReference>
<dbReference type="InterPro" id="IPR028290">
    <property type="entry name" value="WASH1"/>
</dbReference>
<dbReference type="InterPro" id="IPR021854">
    <property type="entry name" value="WASH1_WAHD"/>
</dbReference>
<dbReference type="PANTHER" id="PTHR23331">
    <property type="entry name" value="CXYORF1"/>
    <property type="match status" value="1"/>
</dbReference>
<dbReference type="PANTHER" id="PTHR23331:SF1">
    <property type="entry name" value="WASH COMPLEX SUBUNIT 1"/>
    <property type="match status" value="1"/>
</dbReference>
<dbReference type="Pfam" id="PF11945">
    <property type="entry name" value="WASH_WAHD"/>
    <property type="match status" value="1"/>
</dbReference>
<protein>
    <recommendedName>
        <fullName evidence="1">WASH complex subunit 1</fullName>
    </recommendedName>
    <alternativeName>
        <fullName>Protein washout</fullName>
    </alternativeName>
    <alternativeName>
        <fullName>WAS protein family homolog 1</fullName>
    </alternativeName>
</protein>
<organism>
    <name type="scientific">Drosophila melanogaster</name>
    <name type="common">Fruit fly</name>
    <dbReference type="NCBI Taxonomy" id="7227"/>
    <lineage>
        <taxon>Eukaryota</taxon>
        <taxon>Metazoa</taxon>
        <taxon>Ecdysozoa</taxon>
        <taxon>Arthropoda</taxon>
        <taxon>Hexapoda</taxon>
        <taxon>Insecta</taxon>
        <taxon>Pterygota</taxon>
        <taxon>Neoptera</taxon>
        <taxon>Endopterygota</taxon>
        <taxon>Diptera</taxon>
        <taxon>Brachycera</taxon>
        <taxon>Muscomorpha</taxon>
        <taxon>Ephydroidea</taxon>
        <taxon>Drosophilidae</taxon>
        <taxon>Drosophila</taxon>
        <taxon>Sophophora</taxon>
    </lineage>
</organism>
<sequence>MEESPYLHSPYQVAIIATDLHHEDTIIQAAQSLDCLHKTINSIFERIDARLARNGSKVEDINNRVKRAQAKIDALVGSKRAIQIFAPARFPASDVLAPLPATFPQVAANPLMEQQVDQLPQGTYSSHSAADQKPDDADIFFHVRGDREQESPLVAERKITNRTAGLGILPAGGVRSVPSLMRFNTNEFAYGEDLNAWKRSLPPQNARRVASQSTQLTGEKQLAPAPHSLAHGTTKLATPAGDLRYNPAALAAPAIDVPLDLPDLPGIANDLQYEPVEEQTPIAPSQQFGDLPELPDLGLEEQDIIVQAIAAQTHIPGPVRRKSVGQCPSPVTAAPPPPPPPPPPPPPPPPAQTSAIPSPPPFPTKGAVKPLSPSLATPLNMPQPPPATEDPRSELMAAIRNAGGVHGGRLRSPAAAPLDVVDNSRSKAGGAVTGDLMADLHNKLMLRRKGISGSQNPVEATAGNPLMQQLSRVIPPPVQPRKGSKSSDEHSEDDEDGWN</sequence>
<feature type="chain" id="PRO_0000390969" description="WASH complex subunit 1">
    <location>
        <begin position="1"/>
        <end position="499"/>
    </location>
</feature>
<feature type="domain" description="WH2">
    <location>
        <begin position="391"/>
        <end position="413"/>
    </location>
</feature>
<feature type="region of interest" description="Disordered" evidence="2">
    <location>
        <begin position="317"/>
        <end position="433"/>
    </location>
</feature>
<feature type="region of interest" description="Disordered" evidence="2">
    <location>
        <begin position="448"/>
        <end position="499"/>
    </location>
</feature>
<feature type="compositionally biased region" description="Pro residues" evidence="2">
    <location>
        <begin position="333"/>
        <end position="363"/>
    </location>
</feature>
<feature type="compositionally biased region" description="Acidic residues" evidence="2">
    <location>
        <begin position="490"/>
        <end position="499"/>
    </location>
</feature>
<feature type="modified residue" description="Phosphoserine" evidence="4">
    <location>
        <position position="491"/>
    </location>
</feature>